<gene>
    <name type="primary">lysI</name>
    <name type="ordered locus">Cgl0968</name>
    <name type="ordered locus">cg1105</name>
</gene>
<comment type="function">
    <text>Permease that is involved in the transport across the membrane of lysine.</text>
</comment>
<comment type="subcellular location">
    <subcellularLocation>
        <location>Cell membrane</location>
        <topology>Multi-pass membrane protein</topology>
    </subcellularLocation>
</comment>
<comment type="similarity">
    <text evidence="2">Belongs to the amino acid-polyamine-organocation (APC) superfamily. Basic amino acid/polyamine antiporter (APA) (TC 2.A.3.2) family.</text>
</comment>
<accession>P35865</accession>
<organism>
    <name type="scientific">Corynebacterium glutamicum (strain ATCC 13032 / DSM 20300 / JCM 1318 / BCRC 11384 / CCUG 27702 / LMG 3730 / NBRC 12168 / NCIMB 10025 / NRRL B-2784 / 534)</name>
    <dbReference type="NCBI Taxonomy" id="196627"/>
    <lineage>
        <taxon>Bacteria</taxon>
        <taxon>Bacillati</taxon>
        <taxon>Actinomycetota</taxon>
        <taxon>Actinomycetes</taxon>
        <taxon>Mycobacteriales</taxon>
        <taxon>Corynebacteriaceae</taxon>
        <taxon>Corynebacterium</taxon>
    </lineage>
</organism>
<name>LYSI_CORGL</name>
<reference key="1">
    <citation type="journal article" date="1991" name="Mol. Microbiol.">
        <title>Molecular analysis of the Corynebacterium glutamicum lysl gene involved in lysine uptake.</title>
        <authorList>
            <person name="Seep-Feldhaus A.H."/>
            <person name="Kalinowski J."/>
            <person name="Puehler A."/>
        </authorList>
    </citation>
    <scope>NUCLEOTIDE SEQUENCE [GENOMIC DNA]</scope>
    <source>
        <strain>ATCC 13032 / DSM 20300 / JCM 1318 / BCRC 11384 / CCUG 27702 / LMG 3730 / NBRC 12168 / NCIMB 10025 / NRRL B-2784 / 534</strain>
    </source>
</reference>
<reference key="2">
    <citation type="journal article" date="2003" name="Appl. Microbiol. Biotechnol.">
        <title>The Corynebacterium glutamicum genome: features and impacts on biotechnological processes.</title>
        <authorList>
            <person name="Ikeda M."/>
            <person name="Nakagawa S."/>
        </authorList>
    </citation>
    <scope>NUCLEOTIDE SEQUENCE [LARGE SCALE GENOMIC DNA]</scope>
    <source>
        <strain>ATCC 13032 / DSM 20300 / JCM 1318 / BCRC 11384 / CCUG 27702 / LMG 3730 / NBRC 12168 / NCIMB 10025 / NRRL B-2784 / 534</strain>
    </source>
</reference>
<reference key="3">
    <citation type="journal article" date="2003" name="J. Biotechnol.">
        <title>The complete Corynebacterium glutamicum ATCC 13032 genome sequence and its impact on the production of L-aspartate-derived amino acids and vitamins.</title>
        <authorList>
            <person name="Kalinowski J."/>
            <person name="Bathe B."/>
            <person name="Bartels D."/>
            <person name="Bischoff N."/>
            <person name="Bott M."/>
            <person name="Burkovski A."/>
            <person name="Dusch N."/>
            <person name="Eggeling L."/>
            <person name="Eikmanns B.J."/>
            <person name="Gaigalat L."/>
            <person name="Goesmann A."/>
            <person name="Hartmann M."/>
            <person name="Huthmacher K."/>
            <person name="Kraemer R."/>
            <person name="Linke B."/>
            <person name="McHardy A.C."/>
            <person name="Meyer F."/>
            <person name="Moeckel B."/>
            <person name="Pfefferle W."/>
            <person name="Puehler A."/>
            <person name="Rey D.A."/>
            <person name="Rueckert C."/>
            <person name="Rupp O."/>
            <person name="Sahm H."/>
            <person name="Wendisch V.F."/>
            <person name="Wiegraebe I."/>
            <person name="Tauch A."/>
        </authorList>
    </citation>
    <scope>NUCLEOTIDE SEQUENCE [LARGE SCALE GENOMIC DNA]</scope>
    <source>
        <strain>ATCC 13032 / DSM 20300 / JCM 1318 / BCRC 11384 / CCUG 27702 / LMG 3730 / NBRC 12168 / NCIMB 10025 / NRRL B-2784 / 534</strain>
    </source>
</reference>
<proteinExistence type="inferred from homology"/>
<sequence length="501" mass="53630">MNTQSDSAGSQGAAATSRTVSIRTLIALIIGSTVGAGIFSIPQNIGSVAGPGAMLIGWLIAGVGMLSVAFVFHVLARRKPHLDSGVYAYARVGLGDYVGFSSAWGYWLGSVIAQVGYATLFFSTLGHYVPLFSQDHPFVSALAVSALTWLVFGVVSRGISQAAFLTTVTTVAKILPLLCFIILVAFLGFSWEKFTVDLWARDGGVGSIFDQVRGIMVYTVWVFIGIEGASVYSRQARSRSDVSRATVIGFVAVLLLLVSISSLSFGVLTQQELAALPDNSMASVLEAVVGPWGAALISLGLCLSVLGAYVSWQMLCAEPLALMAMDGLIPSKIGAINSRGAAWMAQLISTIVIQIFIIIFFLNETTYVSMVQLATNLYLVPYLFSAFYLVMLATRGKGITHPHAGTRFDDSGPEISRRENRKHLIVGLVATVYSVWLFYAAEPQFVLFGAMAMLPGLIPYVWTRIYRGEQVFNRFEIGVVVVLVVAASAGVIGLVNGSLSL</sequence>
<keyword id="KW-0029">Amino-acid transport</keyword>
<keyword id="KW-1003">Cell membrane</keyword>
<keyword id="KW-0472">Membrane</keyword>
<keyword id="KW-1185">Reference proteome</keyword>
<keyword id="KW-0812">Transmembrane</keyword>
<keyword id="KW-1133">Transmembrane helix</keyword>
<keyword id="KW-0813">Transport</keyword>
<feature type="chain" id="PRO_0000054249" description="L-lysine transport protein">
    <location>
        <begin position="1"/>
        <end position="501"/>
    </location>
</feature>
<feature type="transmembrane region" description="Helical" evidence="1">
    <location>
        <begin position="25"/>
        <end position="41"/>
    </location>
</feature>
<feature type="transmembrane region" description="Helical" evidence="1">
    <location>
        <begin position="52"/>
        <end position="76"/>
    </location>
</feature>
<feature type="transmembrane region" description="Helical" evidence="1">
    <location>
        <begin position="92"/>
        <end position="113"/>
    </location>
</feature>
<feature type="transmembrane region" description="Helical" evidence="1">
    <location>
        <begin position="138"/>
        <end position="155"/>
    </location>
</feature>
<feature type="transmembrane region" description="Helical" evidence="1">
    <location>
        <begin position="174"/>
        <end position="191"/>
    </location>
</feature>
<feature type="transmembrane region" description="Helical" evidence="1">
    <location>
        <begin position="214"/>
        <end position="232"/>
    </location>
</feature>
<feature type="transmembrane region" description="Helical" evidence="1">
    <location>
        <begin position="247"/>
        <end position="269"/>
    </location>
</feature>
<feature type="transmembrane region" description="Helical" evidence="1">
    <location>
        <begin position="292"/>
        <end position="316"/>
    </location>
</feature>
<feature type="transmembrane region" description="Helical" evidence="1">
    <location>
        <begin position="340"/>
        <end position="362"/>
    </location>
</feature>
<feature type="transmembrane region" description="Helical" evidence="1">
    <location>
        <begin position="377"/>
        <end position="393"/>
    </location>
</feature>
<feature type="transmembrane region" description="Helical" evidence="1">
    <location>
        <begin position="424"/>
        <end position="440"/>
    </location>
</feature>
<feature type="transmembrane region" description="Helical" evidence="1">
    <location>
        <begin position="447"/>
        <end position="463"/>
    </location>
</feature>
<feature type="transmembrane region" description="Helical" evidence="1">
    <location>
        <begin position="477"/>
        <end position="495"/>
    </location>
</feature>
<evidence type="ECO:0000255" key="1"/>
<evidence type="ECO:0000305" key="2"/>
<protein>
    <recommendedName>
        <fullName>L-lysine transport protein</fullName>
    </recommendedName>
    <alternativeName>
        <fullName>L-lysine permease</fullName>
    </alternativeName>
</protein>
<dbReference type="EMBL" id="X60312">
    <property type="protein sequence ID" value="CAA42855.1"/>
    <property type="molecule type" value="Genomic_DNA"/>
</dbReference>
<dbReference type="EMBL" id="BA000036">
    <property type="protein sequence ID" value="BAB98361.1"/>
    <property type="molecule type" value="Genomic_DNA"/>
</dbReference>
<dbReference type="EMBL" id="BX927150">
    <property type="protein sequence ID" value="CAF19675.1"/>
    <property type="molecule type" value="Genomic_DNA"/>
</dbReference>
<dbReference type="PIR" id="S18573">
    <property type="entry name" value="S18573"/>
</dbReference>
<dbReference type="RefSeq" id="NP_600195.1">
    <property type="nucleotide sequence ID" value="NC_003450.3"/>
</dbReference>
<dbReference type="RefSeq" id="WP_011014015.1">
    <property type="nucleotide sequence ID" value="NC_006958.1"/>
</dbReference>
<dbReference type="SMR" id="P35865"/>
<dbReference type="STRING" id="196627.cg1105"/>
<dbReference type="TCDB" id="2.A.3.2.4">
    <property type="family name" value="the amino acid-polyamine-organocation (apc) family"/>
</dbReference>
<dbReference type="KEGG" id="cgb:cg1105"/>
<dbReference type="KEGG" id="cgl:Cgl0968"/>
<dbReference type="PATRIC" id="fig|196627.13.peg.953"/>
<dbReference type="eggNOG" id="COG0531">
    <property type="taxonomic scope" value="Bacteria"/>
</dbReference>
<dbReference type="HOGENOM" id="CLU_007946_1_2_11"/>
<dbReference type="OrthoDB" id="3185104at2"/>
<dbReference type="BioCyc" id="CORYNE:G18NG-10539-MONOMER"/>
<dbReference type="Proteomes" id="UP000000582">
    <property type="component" value="Chromosome"/>
</dbReference>
<dbReference type="Proteomes" id="UP000001009">
    <property type="component" value="Chromosome"/>
</dbReference>
<dbReference type="GO" id="GO:0005886">
    <property type="term" value="C:plasma membrane"/>
    <property type="evidence" value="ECO:0007669"/>
    <property type="project" value="UniProtKB-SubCell"/>
</dbReference>
<dbReference type="GO" id="GO:0022857">
    <property type="term" value="F:transmembrane transporter activity"/>
    <property type="evidence" value="ECO:0007669"/>
    <property type="project" value="InterPro"/>
</dbReference>
<dbReference type="GO" id="GO:0006865">
    <property type="term" value="P:amino acid transport"/>
    <property type="evidence" value="ECO:0007669"/>
    <property type="project" value="UniProtKB-KW"/>
</dbReference>
<dbReference type="Gene3D" id="1.20.1740.10">
    <property type="entry name" value="Amino acid/polyamine transporter I"/>
    <property type="match status" value="1"/>
</dbReference>
<dbReference type="InterPro" id="IPR002293">
    <property type="entry name" value="AA/rel_permease1"/>
</dbReference>
<dbReference type="InterPro" id="IPR004754">
    <property type="entry name" value="Amino_acid_antiprt"/>
</dbReference>
<dbReference type="InterPro" id="IPR050367">
    <property type="entry name" value="APC_superfamily"/>
</dbReference>
<dbReference type="NCBIfam" id="TIGR00905">
    <property type="entry name" value="2A0302"/>
    <property type="match status" value="1"/>
</dbReference>
<dbReference type="PANTHER" id="PTHR42770">
    <property type="entry name" value="AMINO ACID TRANSPORTER-RELATED"/>
    <property type="match status" value="1"/>
</dbReference>
<dbReference type="PANTHER" id="PTHR42770:SF4">
    <property type="entry name" value="ARGININE_ORNITHINE ANTIPORTER-RELATED"/>
    <property type="match status" value="1"/>
</dbReference>
<dbReference type="Pfam" id="PF13520">
    <property type="entry name" value="AA_permease_2"/>
    <property type="match status" value="1"/>
</dbReference>
<dbReference type="PIRSF" id="PIRSF006060">
    <property type="entry name" value="AA_transporter"/>
    <property type="match status" value="1"/>
</dbReference>